<accession>A8FMA8</accession>
<protein>
    <recommendedName>
        <fullName evidence="1">UDP-N-acetylmuramate--L-alanine ligase</fullName>
        <ecNumber evidence="1">6.3.2.8</ecNumber>
    </recommendedName>
    <alternativeName>
        <fullName evidence="1">UDP-N-acetylmuramoyl-L-alanine synthetase</fullName>
    </alternativeName>
</protein>
<evidence type="ECO:0000255" key="1">
    <source>
        <dbReference type="HAMAP-Rule" id="MF_00046"/>
    </source>
</evidence>
<name>MURC_CAMJ8</name>
<sequence length="431" mass="48128">MQNIHFIGIGGIGISALARFLKEKGFKISGSDLKESKITKELEKEGVKVSIPHHKDNILNKDLVIYSAAIKEENPEFKHAKELGIKCLSRKEALPLILEDKRVFAVAGAHGKSTTSSILASLLDDASVIIGAILKEFGSNMIYKESQNLVFEADESDSSFLNSNPYLAIVTNAEAEHLDHYGNEVSKLHHAYTQFLDVAKIRVINAEDEFLKNYKNESIKLYPSKDIKNCTMCIENFKPFTSFELKDLGEFKVFGMGYHLALDASLAILAALNFLDIETIRTRLKNYQGIKKRFDILHADENLVLIDDYGHHPTEIKATLSAAQEYAKLGGYKKITAIFEPHRYTRLAANLKEFAKAFEGVDELVILPVYAAGEEPIELDLKAVFPKALFVEDIKREGKFLVASKGQVFEEGLIIGFGAGDISNKLRQKNE</sequence>
<organism>
    <name type="scientific">Campylobacter jejuni subsp. jejuni serotype O:6 (strain 81116 / NCTC 11828)</name>
    <dbReference type="NCBI Taxonomy" id="407148"/>
    <lineage>
        <taxon>Bacteria</taxon>
        <taxon>Pseudomonadati</taxon>
        <taxon>Campylobacterota</taxon>
        <taxon>Epsilonproteobacteria</taxon>
        <taxon>Campylobacterales</taxon>
        <taxon>Campylobacteraceae</taxon>
        <taxon>Campylobacter</taxon>
    </lineage>
</organism>
<feature type="chain" id="PRO_0000336820" description="UDP-N-acetylmuramate--L-alanine ligase">
    <location>
        <begin position="1"/>
        <end position="431"/>
    </location>
</feature>
<feature type="binding site" evidence="1">
    <location>
        <begin position="108"/>
        <end position="114"/>
    </location>
    <ligand>
        <name>ATP</name>
        <dbReference type="ChEBI" id="CHEBI:30616"/>
    </ligand>
</feature>
<reference key="1">
    <citation type="journal article" date="2007" name="J. Bacteriol.">
        <title>The complete genome sequence of Campylobacter jejuni strain 81116 (NCTC11828).</title>
        <authorList>
            <person name="Pearson B.M."/>
            <person name="Gaskin D.J.H."/>
            <person name="Segers R.P.A.M."/>
            <person name="Wells J.M."/>
            <person name="Nuijten P.J.M."/>
            <person name="van Vliet A.H.M."/>
        </authorList>
    </citation>
    <scope>NUCLEOTIDE SEQUENCE [LARGE SCALE GENOMIC DNA]</scope>
    <source>
        <strain>81116 / NCTC 11828</strain>
    </source>
</reference>
<proteinExistence type="inferred from homology"/>
<keyword id="KW-0067">ATP-binding</keyword>
<keyword id="KW-0131">Cell cycle</keyword>
<keyword id="KW-0132">Cell division</keyword>
<keyword id="KW-0133">Cell shape</keyword>
<keyword id="KW-0961">Cell wall biogenesis/degradation</keyword>
<keyword id="KW-0963">Cytoplasm</keyword>
<keyword id="KW-0436">Ligase</keyword>
<keyword id="KW-0547">Nucleotide-binding</keyword>
<keyword id="KW-0573">Peptidoglycan synthesis</keyword>
<comment type="function">
    <text evidence="1">Cell wall formation.</text>
</comment>
<comment type="catalytic activity">
    <reaction evidence="1">
        <text>UDP-N-acetyl-alpha-D-muramate + L-alanine + ATP = UDP-N-acetyl-alpha-D-muramoyl-L-alanine + ADP + phosphate + H(+)</text>
        <dbReference type="Rhea" id="RHEA:23372"/>
        <dbReference type="ChEBI" id="CHEBI:15378"/>
        <dbReference type="ChEBI" id="CHEBI:30616"/>
        <dbReference type="ChEBI" id="CHEBI:43474"/>
        <dbReference type="ChEBI" id="CHEBI:57972"/>
        <dbReference type="ChEBI" id="CHEBI:70757"/>
        <dbReference type="ChEBI" id="CHEBI:83898"/>
        <dbReference type="ChEBI" id="CHEBI:456216"/>
        <dbReference type="EC" id="6.3.2.8"/>
    </reaction>
</comment>
<comment type="pathway">
    <text evidence="1">Cell wall biogenesis; peptidoglycan biosynthesis.</text>
</comment>
<comment type="subcellular location">
    <subcellularLocation>
        <location evidence="1">Cytoplasm</location>
    </subcellularLocation>
</comment>
<comment type="similarity">
    <text evidence="1">Belongs to the MurCDEF family.</text>
</comment>
<dbReference type="EC" id="6.3.2.8" evidence="1"/>
<dbReference type="EMBL" id="CP000814">
    <property type="protein sequence ID" value="ABV52595.1"/>
    <property type="molecule type" value="Genomic_DNA"/>
</dbReference>
<dbReference type="SMR" id="A8FMA8"/>
<dbReference type="KEGG" id="cju:C8J_0996"/>
<dbReference type="HOGENOM" id="CLU_028104_2_2_7"/>
<dbReference type="UniPathway" id="UPA00219"/>
<dbReference type="GO" id="GO:0005737">
    <property type="term" value="C:cytoplasm"/>
    <property type="evidence" value="ECO:0007669"/>
    <property type="project" value="UniProtKB-SubCell"/>
</dbReference>
<dbReference type="GO" id="GO:0005524">
    <property type="term" value="F:ATP binding"/>
    <property type="evidence" value="ECO:0007669"/>
    <property type="project" value="UniProtKB-UniRule"/>
</dbReference>
<dbReference type="GO" id="GO:0008763">
    <property type="term" value="F:UDP-N-acetylmuramate-L-alanine ligase activity"/>
    <property type="evidence" value="ECO:0007669"/>
    <property type="project" value="UniProtKB-UniRule"/>
</dbReference>
<dbReference type="GO" id="GO:0051301">
    <property type="term" value="P:cell division"/>
    <property type="evidence" value="ECO:0007669"/>
    <property type="project" value="UniProtKB-KW"/>
</dbReference>
<dbReference type="GO" id="GO:0071555">
    <property type="term" value="P:cell wall organization"/>
    <property type="evidence" value="ECO:0007669"/>
    <property type="project" value="UniProtKB-KW"/>
</dbReference>
<dbReference type="GO" id="GO:0009252">
    <property type="term" value="P:peptidoglycan biosynthetic process"/>
    <property type="evidence" value="ECO:0007669"/>
    <property type="project" value="UniProtKB-UniRule"/>
</dbReference>
<dbReference type="GO" id="GO:0008360">
    <property type="term" value="P:regulation of cell shape"/>
    <property type="evidence" value="ECO:0007669"/>
    <property type="project" value="UniProtKB-KW"/>
</dbReference>
<dbReference type="Gene3D" id="3.90.190.20">
    <property type="entry name" value="Mur ligase, C-terminal domain"/>
    <property type="match status" value="1"/>
</dbReference>
<dbReference type="Gene3D" id="3.40.1190.10">
    <property type="entry name" value="Mur-like, catalytic domain"/>
    <property type="match status" value="1"/>
</dbReference>
<dbReference type="Gene3D" id="3.40.50.720">
    <property type="entry name" value="NAD(P)-binding Rossmann-like Domain"/>
    <property type="match status" value="1"/>
</dbReference>
<dbReference type="HAMAP" id="MF_00046">
    <property type="entry name" value="MurC"/>
    <property type="match status" value="1"/>
</dbReference>
<dbReference type="InterPro" id="IPR036565">
    <property type="entry name" value="Mur-like_cat_sf"/>
</dbReference>
<dbReference type="InterPro" id="IPR004101">
    <property type="entry name" value="Mur_ligase_C"/>
</dbReference>
<dbReference type="InterPro" id="IPR036615">
    <property type="entry name" value="Mur_ligase_C_dom_sf"/>
</dbReference>
<dbReference type="InterPro" id="IPR013221">
    <property type="entry name" value="Mur_ligase_cen"/>
</dbReference>
<dbReference type="InterPro" id="IPR000713">
    <property type="entry name" value="Mur_ligase_N"/>
</dbReference>
<dbReference type="InterPro" id="IPR050061">
    <property type="entry name" value="MurCDEF_pg_biosynth"/>
</dbReference>
<dbReference type="InterPro" id="IPR005758">
    <property type="entry name" value="UDP-N-AcMur_Ala_ligase_MurC"/>
</dbReference>
<dbReference type="NCBIfam" id="TIGR01082">
    <property type="entry name" value="murC"/>
    <property type="match status" value="1"/>
</dbReference>
<dbReference type="PANTHER" id="PTHR43445:SF3">
    <property type="entry name" value="UDP-N-ACETYLMURAMATE--L-ALANINE LIGASE"/>
    <property type="match status" value="1"/>
</dbReference>
<dbReference type="PANTHER" id="PTHR43445">
    <property type="entry name" value="UDP-N-ACETYLMURAMATE--L-ALANINE LIGASE-RELATED"/>
    <property type="match status" value="1"/>
</dbReference>
<dbReference type="Pfam" id="PF01225">
    <property type="entry name" value="Mur_ligase"/>
    <property type="match status" value="1"/>
</dbReference>
<dbReference type="Pfam" id="PF02875">
    <property type="entry name" value="Mur_ligase_C"/>
    <property type="match status" value="1"/>
</dbReference>
<dbReference type="Pfam" id="PF08245">
    <property type="entry name" value="Mur_ligase_M"/>
    <property type="match status" value="1"/>
</dbReference>
<dbReference type="SUPFAM" id="SSF51984">
    <property type="entry name" value="MurCD N-terminal domain"/>
    <property type="match status" value="1"/>
</dbReference>
<dbReference type="SUPFAM" id="SSF53623">
    <property type="entry name" value="MurD-like peptide ligases, catalytic domain"/>
    <property type="match status" value="1"/>
</dbReference>
<dbReference type="SUPFAM" id="SSF53244">
    <property type="entry name" value="MurD-like peptide ligases, peptide-binding domain"/>
    <property type="match status" value="1"/>
</dbReference>
<gene>
    <name evidence="1" type="primary">murC</name>
    <name type="ordered locus">C8J_0996</name>
</gene>